<accession>A1JKB8</accession>
<protein>
    <recommendedName>
        <fullName evidence="1">Protein NrdI</fullName>
    </recommendedName>
</protein>
<sequence length="134" mass="14990">MNPLVYFSSSSQNTHRFVEKLELPAIRIPIAGTREKLRVEQPYILLVPSYGGGSPVGAVPIQVIRFLNDPHNRSLIRGVIAAGNTNFGDAYCLAGKIISQKCQVPYLYRFELLGTAEDVVNVRKGVTEFWQRQN</sequence>
<reference key="1">
    <citation type="journal article" date="2006" name="PLoS Genet.">
        <title>The complete genome sequence and comparative genome analysis of the high pathogenicity Yersinia enterocolitica strain 8081.</title>
        <authorList>
            <person name="Thomson N.R."/>
            <person name="Howard S."/>
            <person name="Wren B.W."/>
            <person name="Holden M.T.G."/>
            <person name="Crossman L."/>
            <person name="Challis G.L."/>
            <person name="Churcher C."/>
            <person name="Mungall K."/>
            <person name="Brooks K."/>
            <person name="Chillingworth T."/>
            <person name="Feltwell T."/>
            <person name="Abdellah Z."/>
            <person name="Hauser H."/>
            <person name="Jagels K."/>
            <person name="Maddison M."/>
            <person name="Moule S."/>
            <person name="Sanders M."/>
            <person name="Whitehead S."/>
            <person name="Quail M.A."/>
            <person name="Dougan G."/>
            <person name="Parkhill J."/>
            <person name="Prentice M.B."/>
        </authorList>
    </citation>
    <scope>NUCLEOTIDE SEQUENCE [LARGE SCALE GENOMIC DNA]</scope>
    <source>
        <strain>NCTC 13174 / 8081</strain>
    </source>
</reference>
<proteinExistence type="inferred from homology"/>
<comment type="function">
    <text evidence="1">Probably involved in ribonucleotide reductase function.</text>
</comment>
<comment type="similarity">
    <text evidence="1">Belongs to the NrdI family.</text>
</comment>
<evidence type="ECO:0000255" key="1">
    <source>
        <dbReference type="HAMAP-Rule" id="MF_00128"/>
    </source>
</evidence>
<organism>
    <name type="scientific">Yersinia enterocolitica serotype O:8 / biotype 1B (strain NCTC 13174 / 8081)</name>
    <dbReference type="NCBI Taxonomy" id="393305"/>
    <lineage>
        <taxon>Bacteria</taxon>
        <taxon>Pseudomonadati</taxon>
        <taxon>Pseudomonadota</taxon>
        <taxon>Gammaproteobacteria</taxon>
        <taxon>Enterobacterales</taxon>
        <taxon>Yersiniaceae</taxon>
        <taxon>Yersinia</taxon>
    </lineage>
</organism>
<dbReference type="EMBL" id="AM286415">
    <property type="protein sequence ID" value="CAL11029.1"/>
    <property type="molecule type" value="Genomic_DNA"/>
</dbReference>
<dbReference type="RefSeq" id="WP_011815706.1">
    <property type="nucleotide sequence ID" value="NC_008800.1"/>
</dbReference>
<dbReference type="RefSeq" id="YP_001005266.1">
    <property type="nucleotide sequence ID" value="NC_008800.1"/>
</dbReference>
<dbReference type="SMR" id="A1JKB8"/>
<dbReference type="KEGG" id="yen:YE0928"/>
<dbReference type="PATRIC" id="fig|393305.7.peg.1028"/>
<dbReference type="eggNOG" id="COG1780">
    <property type="taxonomic scope" value="Bacteria"/>
</dbReference>
<dbReference type="HOGENOM" id="CLU_114845_0_0_6"/>
<dbReference type="OrthoDB" id="350535at2"/>
<dbReference type="Proteomes" id="UP000000642">
    <property type="component" value="Chromosome"/>
</dbReference>
<dbReference type="GO" id="GO:0010181">
    <property type="term" value="F:FMN binding"/>
    <property type="evidence" value="ECO:0007669"/>
    <property type="project" value="InterPro"/>
</dbReference>
<dbReference type="GO" id="GO:0036211">
    <property type="term" value="P:protein modification process"/>
    <property type="evidence" value="ECO:0007669"/>
    <property type="project" value="InterPro"/>
</dbReference>
<dbReference type="FunFam" id="3.40.50.360:FF:000005">
    <property type="entry name" value="Protein NrdI"/>
    <property type="match status" value="1"/>
</dbReference>
<dbReference type="Gene3D" id="3.40.50.360">
    <property type="match status" value="1"/>
</dbReference>
<dbReference type="HAMAP" id="MF_00128">
    <property type="entry name" value="NrdI"/>
    <property type="match status" value="1"/>
</dbReference>
<dbReference type="InterPro" id="IPR029039">
    <property type="entry name" value="Flavoprotein-like_sf"/>
</dbReference>
<dbReference type="InterPro" id="IPR020852">
    <property type="entry name" value="RNR_Ib_NrdI_bac"/>
</dbReference>
<dbReference type="InterPro" id="IPR004465">
    <property type="entry name" value="RNR_NrdI"/>
</dbReference>
<dbReference type="NCBIfam" id="TIGR00333">
    <property type="entry name" value="nrdI"/>
    <property type="match status" value="1"/>
</dbReference>
<dbReference type="PANTHER" id="PTHR37297">
    <property type="entry name" value="PROTEIN NRDI"/>
    <property type="match status" value="1"/>
</dbReference>
<dbReference type="PANTHER" id="PTHR37297:SF1">
    <property type="entry name" value="PROTEIN NRDI"/>
    <property type="match status" value="1"/>
</dbReference>
<dbReference type="Pfam" id="PF07972">
    <property type="entry name" value="Flavodoxin_NdrI"/>
    <property type="match status" value="1"/>
</dbReference>
<dbReference type="PIRSF" id="PIRSF005087">
    <property type="entry name" value="NrdI"/>
    <property type="match status" value="1"/>
</dbReference>
<dbReference type="SUPFAM" id="SSF52218">
    <property type="entry name" value="Flavoproteins"/>
    <property type="match status" value="1"/>
</dbReference>
<gene>
    <name evidence="1" type="primary">nrdI</name>
    <name type="ordered locus">YE0928</name>
</gene>
<feature type="chain" id="PRO_1000016536" description="Protein NrdI">
    <location>
        <begin position="1"/>
        <end position="134"/>
    </location>
</feature>
<name>NRDI_YERE8</name>